<dbReference type="EC" id="1.-.-.-" evidence="3"/>
<dbReference type="EMBL" id="PP505398">
    <property type="protein sequence ID" value="WYC13321.1"/>
    <property type="molecule type" value="Genomic_DNA"/>
</dbReference>
<dbReference type="SMR" id="P9WEI5"/>
<dbReference type="UniPathway" id="UPA00213"/>
<dbReference type="GO" id="GO:0016020">
    <property type="term" value="C:membrane"/>
    <property type="evidence" value="ECO:0007669"/>
    <property type="project" value="UniProtKB-SubCell"/>
</dbReference>
<dbReference type="GO" id="GO:0020037">
    <property type="term" value="F:heme binding"/>
    <property type="evidence" value="ECO:0007669"/>
    <property type="project" value="InterPro"/>
</dbReference>
<dbReference type="GO" id="GO:0005506">
    <property type="term" value="F:iron ion binding"/>
    <property type="evidence" value="ECO:0007669"/>
    <property type="project" value="InterPro"/>
</dbReference>
<dbReference type="GO" id="GO:0004497">
    <property type="term" value="F:monooxygenase activity"/>
    <property type="evidence" value="ECO:0007669"/>
    <property type="project" value="UniProtKB-KW"/>
</dbReference>
<dbReference type="GO" id="GO:0016705">
    <property type="term" value="F:oxidoreductase activity, acting on paired donors, with incorporation or reduction of molecular oxygen"/>
    <property type="evidence" value="ECO:0007669"/>
    <property type="project" value="InterPro"/>
</dbReference>
<dbReference type="CDD" id="cd11065">
    <property type="entry name" value="CYP64-like"/>
    <property type="match status" value="1"/>
</dbReference>
<dbReference type="Gene3D" id="1.10.630.10">
    <property type="entry name" value="Cytochrome P450"/>
    <property type="match status" value="1"/>
</dbReference>
<dbReference type="InterPro" id="IPR001128">
    <property type="entry name" value="Cyt_P450"/>
</dbReference>
<dbReference type="InterPro" id="IPR017972">
    <property type="entry name" value="Cyt_P450_CS"/>
</dbReference>
<dbReference type="InterPro" id="IPR002401">
    <property type="entry name" value="Cyt_P450_E_grp-I"/>
</dbReference>
<dbReference type="InterPro" id="IPR036396">
    <property type="entry name" value="Cyt_P450_sf"/>
</dbReference>
<dbReference type="InterPro" id="IPR050364">
    <property type="entry name" value="Cytochrome_P450_fung"/>
</dbReference>
<dbReference type="PANTHER" id="PTHR46300:SF7">
    <property type="entry name" value="P450, PUTATIVE (EUROFUNG)-RELATED"/>
    <property type="match status" value="1"/>
</dbReference>
<dbReference type="PANTHER" id="PTHR46300">
    <property type="entry name" value="P450, PUTATIVE (EUROFUNG)-RELATED-RELATED"/>
    <property type="match status" value="1"/>
</dbReference>
<dbReference type="Pfam" id="PF00067">
    <property type="entry name" value="p450"/>
    <property type="match status" value="1"/>
</dbReference>
<dbReference type="PRINTS" id="PR00463">
    <property type="entry name" value="EP450I"/>
</dbReference>
<dbReference type="SUPFAM" id="SSF48264">
    <property type="entry name" value="Cytochrome P450"/>
    <property type="match status" value="1"/>
</dbReference>
<dbReference type="PROSITE" id="PS00086">
    <property type="entry name" value="CYTOCHROME_P450"/>
    <property type="match status" value="1"/>
</dbReference>
<keyword id="KW-0349">Heme</keyword>
<keyword id="KW-0408">Iron</keyword>
<keyword id="KW-0472">Membrane</keyword>
<keyword id="KW-0479">Metal-binding</keyword>
<keyword id="KW-0503">Monooxygenase</keyword>
<keyword id="KW-0560">Oxidoreductase</keyword>
<keyword id="KW-0812">Transmembrane</keyword>
<keyword id="KW-1133">Transmembrane helix</keyword>
<proteinExistence type="evidence at protein level"/>
<feature type="chain" id="PRO_0000461434" description="Cytochrome P450 monooxygenase claT">
    <location>
        <begin position="1"/>
        <end position="496"/>
    </location>
</feature>
<feature type="transmembrane region" description="Helical" evidence="2">
    <location>
        <begin position="2"/>
        <end position="22"/>
    </location>
</feature>
<feature type="binding site" description="axial binding residue" evidence="1">
    <location>
        <position position="423"/>
    </location>
    <ligand>
        <name>heme</name>
        <dbReference type="ChEBI" id="CHEBI:30413"/>
    </ligand>
    <ligandPart>
        <name>Fe</name>
        <dbReference type="ChEBI" id="CHEBI:18248"/>
    </ligandPart>
</feature>
<name>CLAT_AMPCV</name>
<gene>
    <name evidence="4" type="primary">claT</name>
</gene>
<sequence>MLSLIVEATLLLVVLVLSAHYVRRRMKSLPPGPIGIPILGNMLDMPTHDEAQTIAGWSKKYGDMIFVTIAGTPFLYLNGAKETMDLLDKRSALYSECDMGGLVPLTGYGDRFKLERRLMNQALSARAVEKWEPLVAEETNMMLKRILDAPERFIPHLRRMAGSLIFTSIYGYRVTSDDDPYVKAAEEFMSVSSHAILNGWLVDFLPFLRHVPGLTIHKKAAEWKIKMEEWVEKPHAMFKATLADNPDDNSFCRTLLFPEDGHPIDAETEERIKWVATSMYGAGSDTTVASLSQFILAMILHPEVQKKAQNEVDAVVGRDRLPTLDDRARLPYVECVLKECLRWGTPVPLTIPHRLSQVDEYNGHILPEGTLCVANIWAMLHDERIYPEPHRFYPERYEGKMDAEQTRLLDPSTYIFGFGRRRCPGIHFANPSVWLGMVSLLSTFTFTPSLDKKGREIIPPAKFISGTFRHPEPFKCRITPRHEGVPALIEQVQPAF</sequence>
<organism>
    <name type="scientific">Ampulloclitocybe clavipes</name>
    <name type="common">Club foot</name>
    <name type="synonym">Clitocybe clavipes</name>
    <dbReference type="NCBI Taxonomy" id="56467"/>
    <lineage>
        <taxon>Eukaryota</taxon>
        <taxon>Fungi</taxon>
        <taxon>Dikarya</taxon>
        <taxon>Basidiomycota</taxon>
        <taxon>Agaricomycotina</taxon>
        <taxon>Agaricomycetes</taxon>
        <taxon>Agaricomycetidae</taxon>
        <taxon>Agaricales</taxon>
        <taxon>Hygrophoraceae</taxon>
        <taxon>Ampulloclitocybe</taxon>
    </lineage>
</organism>
<protein>
    <recommendedName>
        <fullName evidence="4">Cytochrome P450 monooxygenase claT</fullName>
        <ecNumber evidence="3">1.-.-.-</ecNumber>
    </recommendedName>
    <alternativeName>
        <fullName evidence="4">Clavilactone A biosynthesis cluster protein T</fullName>
    </alternativeName>
</protein>
<reference key="1">
    <citation type="journal article" date="2024" name="J. Am. Chem. Soc.">
        <title>Two cytochrome P450 enzymes form the tricyclic nested skeleton of meroterpenoids by sequential oxidative reactions.</title>
        <authorList>
            <person name="Yang E."/>
            <person name="Yao Y."/>
            <person name="Su H."/>
            <person name="Sun Z."/>
            <person name="Gao S.S."/>
            <person name="Sureram S."/>
            <person name="Kittakoop P."/>
            <person name="Fan K."/>
            <person name="Pan Y."/>
            <person name="Xu X."/>
            <person name="Sun Z.H."/>
            <person name="Ma G."/>
            <person name="Liu G."/>
        </authorList>
    </citation>
    <scope>NUCLEOTIDE SEQUENCE [GENOMIC DNA]</scope>
    <scope>FUNCTION</scope>
    <scope>CATALYTIC ACTIVITY</scope>
    <scope>PATHWAY</scope>
</reference>
<evidence type="ECO:0000250" key="1">
    <source>
        <dbReference type="UniProtKB" id="P04798"/>
    </source>
</evidence>
<evidence type="ECO:0000255" key="2"/>
<evidence type="ECO:0000269" key="3">
    <source>
    </source>
</evidence>
<evidence type="ECO:0000303" key="4">
    <source>
    </source>
</evidence>
<evidence type="ECO:0000305" key="5"/>
<accession>P9WEI5</accession>
<comment type="function">
    <text evidence="3">Cytochrome P450 monooxygenase; part of the gene cluster that mediates the biosynthesis of clavilactone A, a meroterpenoid that features a unique benzo-fused ten-membered carbocyclic ring unit with an alpha,beta-epoxy-gamma-lactone moiety, forming an intriguing 10/5/3 tricyclic nested skeleton (PubMed:38602511). ClaR, ClaS and ClaT are sufficient to produce clavilactone A (PubMed:38602511). Within the pathway, claT acts as a multifunctional cytochrome P450 monooxygenase that catalyzes a ten-electron oxidation to accomplish the biosynthesis of the 10/5/3 tricyclic nested skeleton in clavilactones (PubMed:38602511). The biosynthesis begins with the prenyltransferase claS that transfers geranyl pyrophosphate (GPP) to hydroquinone to produces geranylhydroquinone. The cytochrome P450 monooxygenase claR then catalyzes the diradical coupling reaction between the intramolecular hydroquinone and allyl moieties to form the benzo-fused ten-membered carbocyclic ring unit of wigantol. Finally the cytochrome P450 monooxygenase claT exquisitely and stereoselectively assembles the alpha,beta-epoxy-gamma-lactone moiety, producing clavilactone A via arnebinol A (PubMed:38602511).</text>
</comment>
<comment type="catalytic activity">
    <reaction evidence="3">
        <text>wigandol + 4 reduced [NADPH--hemoprotein reductase] + 4 O2 = arnebinol A + 4 oxidized [NADPH--hemoprotein reductase] + 6 H2O + 4 H(+)</text>
        <dbReference type="Rhea" id="RHEA:82867"/>
        <dbReference type="Rhea" id="RHEA-COMP:11964"/>
        <dbReference type="Rhea" id="RHEA-COMP:11965"/>
        <dbReference type="ChEBI" id="CHEBI:15377"/>
        <dbReference type="ChEBI" id="CHEBI:15378"/>
        <dbReference type="ChEBI" id="CHEBI:15379"/>
        <dbReference type="ChEBI" id="CHEBI:57618"/>
        <dbReference type="ChEBI" id="CHEBI:58210"/>
        <dbReference type="ChEBI" id="CHEBI:232537"/>
        <dbReference type="ChEBI" id="CHEBI:232560"/>
    </reaction>
    <physiologicalReaction direction="left-to-right" evidence="3">
        <dbReference type="Rhea" id="RHEA:82868"/>
    </physiologicalReaction>
</comment>
<comment type="catalytic activity">
    <reaction evidence="3">
        <text>arnebinol A + reduced [NADPH--hemoprotein reductase] + O2 = clavilactone A + oxidized [NADPH--hemoprotein reductase] + H2O + H(+)</text>
        <dbReference type="Rhea" id="RHEA:82871"/>
        <dbReference type="Rhea" id="RHEA-COMP:11964"/>
        <dbReference type="Rhea" id="RHEA-COMP:11965"/>
        <dbReference type="ChEBI" id="CHEBI:15377"/>
        <dbReference type="ChEBI" id="CHEBI:15378"/>
        <dbReference type="ChEBI" id="CHEBI:15379"/>
        <dbReference type="ChEBI" id="CHEBI:57618"/>
        <dbReference type="ChEBI" id="CHEBI:58210"/>
        <dbReference type="ChEBI" id="CHEBI:232538"/>
        <dbReference type="ChEBI" id="CHEBI:232560"/>
    </reaction>
    <physiologicalReaction direction="left-to-right" evidence="3">
        <dbReference type="Rhea" id="RHEA:82872"/>
    </physiologicalReaction>
</comment>
<comment type="catalytic activity">
    <reaction evidence="3">
        <text>(2E)-geranylhydroquinone + reduced [NADPH--hemoprotein reductase] + O2 = isoalliodorol + oxidized [NADPH--hemoprotein reductase] + H2O + H(+)</text>
        <dbReference type="Rhea" id="RHEA:82875"/>
        <dbReference type="Rhea" id="RHEA-COMP:11964"/>
        <dbReference type="Rhea" id="RHEA-COMP:11965"/>
        <dbReference type="ChEBI" id="CHEBI:15377"/>
        <dbReference type="ChEBI" id="CHEBI:15378"/>
        <dbReference type="ChEBI" id="CHEBI:15379"/>
        <dbReference type="ChEBI" id="CHEBI:24233"/>
        <dbReference type="ChEBI" id="CHEBI:57618"/>
        <dbReference type="ChEBI" id="CHEBI:58210"/>
        <dbReference type="ChEBI" id="CHEBI:232559"/>
    </reaction>
</comment>
<comment type="cofactor">
    <cofactor evidence="1">
        <name>heme</name>
        <dbReference type="ChEBI" id="CHEBI:30413"/>
    </cofactor>
</comment>
<comment type="pathway">
    <text evidence="3">Secondary metabolite biosynthesis; terpenoid biosynthesis.</text>
</comment>
<comment type="subcellular location">
    <subcellularLocation>
        <location evidence="2">Membrane</location>
        <topology evidence="2">Single-pass membrane protein</topology>
    </subcellularLocation>
</comment>
<comment type="similarity">
    <text evidence="5">Belongs to the cytochrome P450 family.</text>
</comment>